<accession>O67434</accession>
<reference evidence="12" key="1">
    <citation type="journal article" date="1998" name="Nature">
        <title>The complete genome of the hyperthermophilic bacterium Aquifex aeolicus.</title>
        <authorList>
            <person name="Deckert G."/>
            <person name="Warren P.V."/>
            <person name="Gaasterland T."/>
            <person name="Young W.G."/>
            <person name="Lenox A.L."/>
            <person name="Graham D.E."/>
            <person name="Overbeek R."/>
            <person name="Snead M.A."/>
            <person name="Keller M."/>
            <person name="Aujay M."/>
            <person name="Huber R."/>
            <person name="Feldman R.A."/>
            <person name="Short J.M."/>
            <person name="Olsen G.J."/>
            <person name="Swanson R.V."/>
        </authorList>
    </citation>
    <scope>NUCLEOTIDE SEQUENCE [LARGE SCALE GENOMIC DNA]</scope>
    <source>
        <strain>VF5</strain>
    </source>
</reference>
<reference key="2">
    <citation type="journal article" date="2019" name="Nucleic Acids Res.">
        <title>The prokaryotic Argonaute proteins enhance homology sequence-directed recombination in bacteria.</title>
        <authorList>
            <person name="Fu L."/>
            <person name="Xie C."/>
            <person name="Jin Z."/>
            <person name="Tu Z."/>
            <person name="Han L."/>
            <person name="Jin M."/>
            <person name="Xiang Y."/>
            <person name="Zhang A."/>
        </authorList>
    </citation>
    <scope>BIOTECHNOLOGY</scope>
</reference>
<reference evidence="15" key="3">
    <citation type="journal article" date="2005" name="Mol. Cell">
        <title>Crystal structure of A. aeolicus argonaute, a site-specific DNA-guided endoribonuclease, provides insights into RISC-mediated mRNA cleavage.</title>
        <authorList>
            <person name="Yuan Y.R."/>
            <person name="Pei Y."/>
            <person name="Ma J.B."/>
            <person name="Kuryavyi V."/>
            <person name="Zhadina M."/>
            <person name="Meister G."/>
            <person name="Chen H.Y."/>
            <person name="Dauter Z."/>
            <person name="Tuschl T."/>
            <person name="Patel D.J."/>
        </authorList>
    </citation>
    <scope>X-RAY CRYSTALLOGRAPHY (2.90 ANGSTROMS) IN COMPLEX WITH CALCIUM</scope>
    <scope>FUNCTION</scope>
    <scope>CATALYTIC ACTIVITY</scope>
    <scope>COFACTOR</scope>
    <scope>BIOPHYSICOCHEMICAL PROPERTIES</scope>
    <scope>SUBUNIT</scope>
    <scope>DOMAIN</scope>
    <scope>NUCLEIC ACID-BINDING</scope>
    <source>
        <strain>VF5</strain>
    </source>
</reference>
<reference evidence="16 17" key="4">
    <citation type="journal article" date="2006" name="Structure">
        <title>A potential protein-RNA recognition event along the RISC-loading pathway from the structure of A. aeolicus Argonaute with externally bound siRNA.</title>
        <authorList>
            <person name="Yuan Y.R."/>
            <person name="Pei Y."/>
            <person name="Chen H.Y."/>
            <person name="Tuschl T."/>
            <person name="Patel D.J."/>
        </authorList>
    </citation>
    <scope>X-RAY CRYSTALLOGRAPHY (3.00 ANGSTROMS) IN COMPLEX WITH RNA</scope>
    <scope>FUNCTION</scope>
    <scope>DOMAIN</scope>
    <scope>MUTAGENESIS OF TYR-119</scope>
</reference>
<reference evidence="18" key="5">
    <citation type="journal article" date="2007" name="J. Biol. Chem.">
        <title>Structure of Aquifex aeolicus argonaute highlights conformational flexibility of the PAZ domain as a potential regulator of RNA-induced silencing complex function.</title>
        <authorList>
            <person name="Rashid U.J."/>
            <person name="Paterok D."/>
            <person name="Koglin A."/>
            <person name="Gohlke H."/>
            <person name="Piehler J."/>
            <person name="Chen J.C."/>
        </authorList>
    </citation>
    <scope>X-RAY CRYSTALLOGRAPHY (3.20 ANGSTROMS)</scope>
    <scope>DOMAIN</scope>
    <scope>SSDNA-BINDING</scope>
</reference>
<dbReference type="EC" id="3.1.26.-" evidence="4"/>
<dbReference type="EMBL" id="AE000657">
    <property type="protein sequence ID" value="AAC07406.1"/>
    <property type="molecule type" value="Genomic_DNA"/>
</dbReference>
<dbReference type="PIR" id="H70425">
    <property type="entry name" value="H70425"/>
</dbReference>
<dbReference type="RefSeq" id="NP_213999.1">
    <property type="nucleotide sequence ID" value="NC_000918.1"/>
</dbReference>
<dbReference type="RefSeq" id="WP_010880937.1">
    <property type="nucleotide sequence ID" value="NC_000918.1"/>
</dbReference>
<dbReference type="PDB" id="1YVU">
    <property type="method" value="X-ray"/>
    <property type="resolution" value="2.90 A"/>
    <property type="chains" value="A=1-706"/>
</dbReference>
<dbReference type="PDB" id="2F8S">
    <property type="method" value="X-ray"/>
    <property type="resolution" value="3.00 A"/>
    <property type="chains" value="A/B=1-706"/>
</dbReference>
<dbReference type="PDB" id="2F8T">
    <property type="method" value="X-ray"/>
    <property type="resolution" value="3.10 A"/>
    <property type="chains" value="A/B=1-706"/>
</dbReference>
<dbReference type="PDB" id="2NUB">
    <property type="method" value="X-ray"/>
    <property type="resolution" value="3.20 A"/>
    <property type="chains" value="A=1-706"/>
</dbReference>
<dbReference type="PDBsum" id="1YVU"/>
<dbReference type="PDBsum" id="2F8S"/>
<dbReference type="PDBsum" id="2F8T"/>
<dbReference type="PDBsum" id="2NUB"/>
<dbReference type="SMR" id="O67434"/>
<dbReference type="DIP" id="DIP-29161N"/>
<dbReference type="STRING" id="224324.aq_1447"/>
<dbReference type="EnsemblBacteria" id="AAC07406">
    <property type="protein sequence ID" value="AAC07406"/>
    <property type="gene ID" value="aq_1447"/>
</dbReference>
<dbReference type="KEGG" id="aae:aq_1447"/>
<dbReference type="PATRIC" id="fig|224324.8.peg.1129"/>
<dbReference type="eggNOG" id="COG1431">
    <property type="taxonomic scope" value="Bacteria"/>
</dbReference>
<dbReference type="HOGENOM" id="CLU_390653_0_0_0"/>
<dbReference type="InParanoid" id="O67434"/>
<dbReference type="OrthoDB" id="436401at2"/>
<dbReference type="EvolutionaryTrace" id="O67434"/>
<dbReference type="Proteomes" id="UP000000798">
    <property type="component" value="Chromosome"/>
</dbReference>
<dbReference type="GO" id="GO:0003677">
    <property type="term" value="F:DNA binding"/>
    <property type="evidence" value="ECO:0007669"/>
    <property type="project" value="UniProtKB-KW"/>
</dbReference>
<dbReference type="GO" id="GO:0046872">
    <property type="term" value="F:metal ion binding"/>
    <property type="evidence" value="ECO:0007669"/>
    <property type="project" value="UniProtKB-KW"/>
</dbReference>
<dbReference type="GO" id="GO:0003723">
    <property type="term" value="F:RNA binding"/>
    <property type="evidence" value="ECO:0000318"/>
    <property type="project" value="GO_Central"/>
</dbReference>
<dbReference type="GO" id="GO:0004521">
    <property type="term" value="F:RNA endonuclease activity"/>
    <property type="evidence" value="ECO:0000314"/>
    <property type="project" value="UniProtKB"/>
</dbReference>
<dbReference type="CDD" id="cd04659">
    <property type="entry name" value="Piwi_piwi-like_ProArk"/>
    <property type="match status" value="1"/>
</dbReference>
<dbReference type="Gene3D" id="3.40.50.2300">
    <property type="match status" value="1"/>
</dbReference>
<dbReference type="Gene3D" id="2.30.340.10">
    <property type="entry name" value="PAZ domain superfamily"/>
    <property type="match status" value="1"/>
</dbReference>
<dbReference type="Gene3D" id="3.30.420.10">
    <property type="entry name" value="Ribonuclease H-like superfamily/Ribonuclease H"/>
    <property type="match status" value="1"/>
</dbReference>
<dbReference type="InterPro" id="IPR041659">
    <property type="entry name" value="Paz_1"/>
</dbReference>
<dbReference type="InterPro" id="IPR003100">
    <property type="entry name" value="PAZ_dom"/>
</dbReference>
<dbReference type="InterPro" id="IPR036085">
    <property type="entry name" value="PAZ_dom_sf"/>
</dbReference>
<dbReference type="InterPro" id="IPR003165">
    <property type="entry name" value="Piwi"/>
</dbReference>
<dbReference type="InterPro" id="IPR012337">
    <property type="entry name" value="RNaseH-like_sf"/>
</dbReference>
<dbReference type="InterPro" id="IPR036397">
    <property type="entry name" value="RNaseH_sf"/>
</dbReference>
<dbReference type="Pfam" id="PF22430">
    <property type="entry name" value="Aa-Ago_N"/>
    <property type="match status" value="1"/>
</dbReference>
<dbReference type="Pfam" id="PF18349">
    <property type="entry name" value="PAZ_4"/>
    <property type="match status" value="1"/>
</dbReference>
<dbReference type="Pfam" id="PF02171">
    <property type="entry name" value="Piwi"/>
    <property type="match status" value="1"/>
</dbReference>
<dbReference type="SMART" id="SM00950">
    <property type="entry name" value="Piwi"/>
    <property type="match status" value="1"/>
</dbReference>
<dbReference type="SUPFAM" id="SSF101690">
    <property type="entry name" value="PAZ domain"/>
    <property type="match status" value="1"/>
</dbReference>
<dbReference type="SUPFAM" id="SSF53098">
    <property type="entry name" value="Ribonuclease H-like"/>
    <property type="match status" value="1"/>
</dbReference>
<dbReference type="PROSITE" id="PS50821">
    <property type="entry name" value="PAZ"/>
    <property type="match status" value="1"/>
</dbReference>
<dbReference type="PROSITE" id="PS50822">
    <property type="entry name" value="PIWI"/>
    <property type="match status" value="1"/>
</dbReference>
<name>AGO_AQUAE</name>
<protein>
    <recommendedName>
        <fullName evidence="8">Protein argonaute</fullName>
        <shortName evidence="8">AaAgo</shortName>
        <ecNumber evidence="4">3.1.26.-</ecNumber>
    </recommendedName>
</protein>
<organism>
    <name type="scientific">Aquifex aeolicus (strain VF5)</name>
    <dbReference type="NCBI Taxonomy" id="224324"/>
    <lineage>
        <taxon>Bacteria</taxon>
        <taxon>Pseudomonadati</taxon>
        <taxon>Aquificota</taxon>
        <taxon>Aquificia</taxon>
        <taxon>Aquificales</taxon>
        <taxon>Aquificaceae</taxon>
        <taxon>Aquifex</taxon>
    </lineage>
</organism>
<keyword id="KW-0002">3D-structure</keyword>
<keyword id="KW-0238">DNA-binding</keyword>
<keyword id="KW-0255">Endonuclease</keyword>
<keyword id="KW-0378">Hydrolase</keyword>
<keyword id="KW-0464">Manganese</keyword>
<keyword id="KW-0479">Metal-binding</keyword>
<keyword id="KW-0540">Nuclease</keyword>
<keyword id="KW-1185">Reference proteome</keyword>
<keyword id="KW-0694">RNA-binding</keyword>
<comment type="function">
    <text evidence="4 11">A DNA-guided RNA endonuclease. Uses short ssDNA sequences as guides (gDNA) to bind complementary target strands, resulting in cleavage of the target RNA. The cleavage site is 10 nucleotides downstream of the residue base paired with the 5'-end of the gDNA (PubMed:16061186). Binds ssDNA better than ssRNA, binds dsDNA and DNA-RNA hybrids but does not bind dsRNA (PubMed:16061186). A 2 nucleotide 3'-overhang (possibly on the guide strand) may help load nucleic acids into the complex (Probable) (PubMed:17027504).</text>
</comment>
<comment type="cofactor">
    <cofactor evidence="4">
        <name>Mg(2+)</name>
        <dbReference type="ChEBI" id="CHEBI:18420"/>
    </cofactor>
    <text evidence="1 4">Mg(2+) is the preferred cation for DNA-guided cleavage while Mn(2+) supports both DNA- and RNA-guided cleavage of an RNA target. Ca(2+), which is found in the structure, does not support cleavage (PubMed:16061186). Cleavage probaby requires 2 divalent metal cations (By similarity).</text>
</comment>
<comment type="biophysicochemical properties">
    <temperatureDependence>
        <text evidence="4">Optimum temperature is 55 degrees Celsius.</text>
    </temperatureDependence>
</comment>
<comment type="domain">
    <text evidence="4 5 6">Has 4 domains; N-terminal, PAZ, Mid and PIWI. The N-terminal and PAZ domain are joined by linker 1, the PAZ and Mid domain are joined by linker 2. The domains assemble in 2 lobes; the PAZ lobe consists of the N-terminal, L1, PAZ and L2 domains, while the PIWI lobe has the Mid and PIWI domains. The PIWI box is exposed on the surface of the protein. The PIWI domain assumes an RNase H fold and has the catalytic residues (PubMed:16061186, PubMed:17027504, PubMed:17130125). The N-terminal and PAZ domains are relatively mobile and move further apart when in complex with RNA (PubMed:17027504, PubMed:17130125).</text>
</comment>
<comment type="biotechnology">
    <text evidence="7">Can be used for genome editing.</text>
</comment>
<comment type="miscellaneous">
    <text evidence="5 13 14">In the structure with dsRNA, the nucleic acid is not found in the expected channel, only the two 3'-terminal residues interact in a possibly physiological manner with the protein.</text>
</comment>
<comment type="similarity">
    <text evidence="9">Belongs to the argonaute family. Long pAgo subfamily.</text>
</comment>
<evidence type="ECO:0000250" key="1">
    <source>
        <dbReference type="UniProtKB" id="Q746M7"/>
    </source>
</evidence>
<evidence type="ECO:0000255" key="2">
    <source>
        <dbReference type="PROSITE-ProRule" id="PRU00142"/>
    </source>
</evidence>
<evidence type="ECO:0000255" key="3">
    <source>
        <dbReference type="PROSITE-ProRule" id="PRU00150"/>
    </source>
</evidence>
<evidence type="ECO:0000269" key="4">
    <source>
    </source>
</evidence>
<evidence type="ECO:0000269" key="5">
    <source>
    </source>
</evidence>
<evidence type="ECO:0000269" key="6">
    <source>
    </source>
</evidence>
<evidence type="ECO:0000269" key="7">
    <source>
    </source>
</evidence>
<evidence type="ECO:0000303" key="8">
    <source>
    </source>
</evidence>
<evidence type="ECO:0000305" key="9"/>
<evidence type="ECO:0000305" key="10">
    <source>
    </source>
</evidence>
<evidence type="ECO:0000305" key="11">
    <source>
    </source>
</evidence>
<evidence type="ECO:0000312" key="12">
    <source>
        <dbReference type="EMBL" id="AAC07406.1"/>
    </source>
</evidence>
<evidence type="ECO:0000312" key="13">
    <source>
        <dbReference type="PDB" id="2F8S"/>
    </source>
</evidence>
<evidence type="ECO:0000312" key="14">
    <source>
        <dbReference type="PDB" id="2F8T"/>
    </source>
</evidence>
<evidence type="ECO:0007744" key="15">
    <source>
        <dbReference type="PDB" id="1YVU"/>
    </source>
</evidence>
<evidence type="ECO:0007744" key="16">
    <source>
        <dbReference type="PDB" id="2F8S"/>
    </source>
</evidence>
<evidence type="ECO:0007744" key="17">
    <source>
        <dbReference type="PDB" id="2F8T"/>
    </source>
</evidence>
<evidence type="ECO:0007744" key="18">
    <source>
        <dbReference type="PDB" id="2NUB"/>
    </source>
</evidence>
<evidence type="ECO:0007829" key="19">
    <source>
        <dbReference type="PDB" id="1YVU"/>
    </source>
</evidence>
<evidence type="ECO:0007829" key="20">
    <source>
        <dbReference type="PDB" id="2F8S"/>
    </source>
</evidence>
<evidence type="ECO:0007829" key="21">
    <source>
        <dbReference type="PDB" id="2F8T"/>
    </source>
</evidence>
<evidence type="ECO:0007829" key="22">
    <source>
        <dbReference type="PDB" id="2NUB"/>
    </source>
</evidence>
<feature type="chain" id="PRO_0000457784" description="Protein argonaute">
    <location>
        <begin position="1"/>
        <end position="706"/>
    </location>
</feature>
<feature type="domain" description="PAZ" evidence="2 4">
    <location>
        <begin position="168"/>
        <end position="259"/>
    </location>
</feature>
<feature type="domain" description="Piwi" evidence="3">
    <location>
        <begin position="419"/>
        <end position="694"/>
    </location>
</feature>
<feature type="region of interest" description="N-terminal domain" evidence="4">
    <location>
        <begin position="1"/>
        <end position="108"/>
    </location>
</feature>
<feature type="region of interest" description="Linker L1" evidence="4">
    <location>
        <begin position="109"/>
        <end position="165"/>
    </location>
</feature>
<feature type="region of interest" description="Linker L2" evidence="4">
    <location>
        <begin position="263"/>
        <end position="334"/>
    </location>
</feature>
<feature type="region of interest" description="Mid domain" evidence="4">
    <location>
        <begin position="335"/>
        <end position="448"/>
    </location>
</feature>
<feature type="region of interest" description="PIWI domain" evidence="4">
    <location>
        <begin position="449"/>
        <end position="706"/>
    </location>
</feature>
<feature type="region of interest" description="PIWI box" evidence="4">
    <location>
        <begin position="612"/>
        <end position="650"/>
    </location>
</feature>
<feature type="active site" evidence="1">
    <location>
        <position position="502"/>
    </location>
</feature>
<feature type="active site" evidence="1">
    <location>
        <position position="541"/>
    </location>
</feature>
<feature type="active site" evidence="1">
    <location>
        <position position="571"/>
    </location>
</feature>
<feature type="active site" evidence="1">
    <location>
        <position position="683"/>
    </location>
</feature>
<feature type="binding site" evidence="1">
    <location>
        <position position="502"/>
    </location>
    <ligand>
        <name>Mn(2+)</name>
        <dbReference type="ChEBI" id="CHEBI:29035"/>
        <label>1</label>
    </ligand>
</feature>
<feature type="binding site" evidence="1 10 15">
    <location>
        <position position="502"/>
    </location>
    <ligand>
        <name>Mn(2+)</name>
        <dbReference type="ChEBI" id="CHEBI:29035"/>
        <label>2</label>
    </ligand>
</feature>
<feature type="binding site" evidence="1">
    <location>
        <position position="571"/>
    </location>
    <ligand>
        <name>Mn(2+)</name>
        <dbReference type="ChEBI" id="CHEBI:29035"/>
        <label>1</label>
    </ligand>
</feature>
<feature type="binding site" evidence="1 10 15">
    <location>
        <position position="683"/>
    </location>
    <ligand>
        <name>Mn(2+)</name>
        <dbReference type="ChEBI" id="CHEBI:29035"/>
        <label>2</label>
    </ligand>
</feature>
<feature type="mutagenesis site" description="No change in DNA-guided RNA cleavage or ssRNA binding, decreased recognition of the 3'-overhang of a dsRNA duplex." evidence="5">
    <original>Y</original>
    <variation>A</variation>
    <location>
        <position position="119"/>
    </location>
</feature>
<feature type="strand" evidence="19">
    <location>
        <begin position="6"/>
        <end position="14"/>
    </location>
</feature>
<feature type="strand" evidence="19">
    <location>
        <begin position="20"/>
        <end position="22"/>
    </location>
</feature>
<feature type="strand" evidence="19">
    <location>
        <begin position="25"/>
        <end position="28"/>
    </location>
</feature>
<feature type="helix" evidence="19">
    <location>
        <begin position="32"/>
        <end position="46"/>
    </location>
</feature>
<feature type="strand" evidence="19">
    <location>
        <begin position="50"/>
        <end position="53"/>
    </location>
</feature>
<feature type="strand" evidence="19">
    <location>
        <begin position="56"/>
        <end position="61"/>
    </location>
</feature>
<feature type="strand" evidence="19">
    <location>
        <begin position="69"/>
        <end position="72"/>
    </location>
</feature>
<feature type="strand" evidence="19">
    <location>
        <begin position="74"/>
        <end position="76"/>
    </location>
</feature>
<feature type="strand" evidence="19">
    <location>
        <begin position="78"/>
        <end position="82"/>
    </location>
</feature>
<feature type="helix" evidence="19">
    <location>
        <begin position="94"/>
        <end position="107"/>
    </location>
</feature>
<feature type="helix" evidence="19">
    <location>
        <begin position="110"/>
        <end position="126"/>
    </location>
</feature>
<feature type="strand" evidence="19">
    <location>
        <begin position="127"/>
        <end position="129"/>
    </location>
</feature>
<feature type="strand" evidence="19">
    <location>
        <begin position="134"/>
        <end position="151"/>
    </location>
</feature>
<feature type="strand" evidence="19">
    <location>
        <begin position="153"/>
        <end position="167"/>
    </location>
</feature>
<feature type="helix" evidence="19">
    <location>
        <begin position="169"/>
        <end position="175"/>
    </location>
</feature>
<feature type="strand" evidence="19">
    <location>
        <begin position="184"/>
        <end position="187"/>
    </location>
</feature>
<feature type="strand" evidence="19">
    <location>
        <begin position="194"/>
        <end position="202"/>
    </location>
</feature>
<feature type="helix" evidence="22">
    <location>
        <begin position="203"/>
        <end position="205"/>
    </location>
</feature>
<feature type="helix" evidence="19">
    <location>
        <begin position="207"/>
        <end position="215"/>
    </location>
</feature>
<feature type="helix" evidence="19">
    <location>
        <begin position="220"/>
        <end position="231"/>
    </location>
</feature>
<feature type="helix" evidence="19">
    <location>
        <begin position="233"/>
        <end position="238"/>
    </location>
</feature>
<feature type="strand" evidence="19">
    <location>
        <begin position="240"/>
        <end position="244"/>
    </location>
</feature>
<feature type="strand" evidence="19">
    <location>
        <begin position="249"/>
        <end position="251"/>
    </location>
</feature>
<feature type="strand" evidence="19">
    <location>
        <begin position="254"/>
        <end position="257"/>
    </location>
</feature>
<feature type="helix" evidence="19">
    <location>
        <begin position="269"/>
        <end position="272"/>
    </location>
</feature>
<feature type="helix" evidence="19">
    <location>
        <begin position="280"/>
        <end position="299"/>
    </location>
</feature>
<feature type="turn" evidence="19">
    <location>
        <begin position="300"/>
        <end position="302"/>
    </location>
</feature>
<feature type="strand" evidence="19">
    <location>
        <begin position="303"/>
        <end position="305"/>
    </location>
</feature>
<feature type="strand" evidence="21">
    <location>
        <begin position="321"/>
        <end position="323"/>
    </location>
</feature>
<feature type="turn" evidence="20">
    <location>
        <begin position="330"/>
        <end position="334"/>
    </location>
</feature>
<feature type="helix" evidence="19">
    <location>
        <begin position="337"/>
        <end position="342"/>
    </location>
</feature>
<feature type="strand" evidence="19">
    <location>
        <begin position="350"/>
        <end position="360"/>
    </location>
</feature>
<feature type="helix" evidence="19">
    <location>
        <begin position="368"/>
        <end position="381"/>
    </location>
</feature>
<feature type="turn" evidence="19">
    <location>
        <begin position="382"/>
        <end position="384"/>
    </location>
</feature>
<feature type="strand" evidence="19">
    <location>
        <begin position="386"/>
        <end position="396"/>
    </location>
</feature>
<feature type="strand" evidence="22">
    <location>
        <begin position="398"/>
        <end position="400"/>
    </location>
</feature>
<feature type="helix" evidence="19">
    <location>
        <begin position="402"/>
        <end position="411"/>
    </location>
</feature>
<feature type="turn" evidence="19">
    <location>
        <begin position="412"/>
        <end position="414"/>
    </location>
</feature>
<feature type="strand" evidence="19">
    <location>
        <begin position="418"/>
        <end position="424"/>
    </location>
</feature>
<feature type="strand" evidence="20">
    <location>
        <begin position="432"/>
        <end position="434"/>
    </location>
</feature>
<feature type="helix" evidence="19">
    <location>
        <begin position="437"/>
        <end position="448"/>
    </location>
</feature>
<feature type="strand" evidence="19">
    <location>
        <begin position="454"/>
        <end position="457"/>
    </location>
</feature>
<feature type="helix" evidence="19">
    <location>
        <begin position="458"/>
        <end position="463"/>
    </location>
</feature>
<feature type="helix" evidence="19">
    <location>
        <begin position="466"/>
        <end position="480"/>
    </location>
</feature>
<feature type="strand" evidence="19">
    <location>
        <begin position="487"/>
        <end position="489"/>
    </location>
</feature>
<feature type="strand" evidence="19">
    <location>
        <begin position="496"/>
        <end position="501"/>
    </location>
</feature>
<feature type="strand" evidence="19">
    <location>
        <begin position="503"/>
        <end position="505"/>
    </location>
</feature>
<feature type="strand" evidence="19">
    <location>
        <begin position="509"/>
        <end position="511"/>
    </location>
</feature>
<feature type="strand" evidence="19">
    <location>
        <begin position="515"/>
        <end position="522"/>
    </location>
</feature>
<feature type="strand" evidence="19">
    <location>
        <begin position="528"/>
        <end position="536"/>
    </location>
</feature>
<feature type="strand" evidence="22">
    <location>
        <begin position="539"/>
        <end position="541"/>
    </location>
</feature>
<feature type="helix" evidence="19">
    <location>
        <begin position="542"/>
        <end position="557"/>
    </location>
</feature>
<feature type="strand" evidence="19">
    <location>
        <begin position="565"/>
        <end position="572"/>
    </location>
</feature>
<feature type="helix" evidence="19">
    <location>
        <begin position="576"/>
        <end position="589"/>
    </location>
</feature>
<feature type="strand" evidence="19">
    <location>
        <begin position="592"/>
        <end position="599"/>
    </location>
</feature>
<feature type="strand" evidence="20">
    <location>
        <begin position="606"/>
        <end position="609"/>
    </location>
</feature>
<feature type="strand" evidence="19">
    <location>
        <begin position="616"/>
        <end position="627"/>
    </location>
</feature>
<feature type="strand" evidence="20">
    <location>
        <begin position="634"/>
        <end position="636"/>
    </location>
</feature>
<feature type="strand" evidence="19">
    <location>
        <begin position="641"/>
        <end position="647"/>
    </location>
</feature>
<feature type="helix" evidence="19">
    <location>
        <begin position="652"/>
        <end position="661"/>
    </location>
</feature>
<feature type="helix" evidence="19">
    <location>
        <begin position="662"/>
        <end position="666"/>
    </location>
</feature>
<feature type="strand" evidence="19">
    <location>
        <begin position="669"/>
        <end position="671"/>
    </location>
</feature>
<feature type="turn" evidence="19">
    <location>
        <begin position="677"/>
        <end position="681"/>
    </location>
</feature>
<feature type="helix" evidence="19">
    <location>
        <begin position="682"/>
        <end position="690"/>
    </location>
</feature>
<feature type="strand" evidence="20">
    <location>
        <begin position="692"/>
        <end position="694"/>
    </location>
</feature>
<feature type="strand" evidence="19">
    <location>
        <begin position="697"/>
        <end position="701"/>
    </location>
</feature>
<gene>
    <name evidence="9" type="primary">ago</name>
    <name evidence="12" type="ordered locus">aq_1447</name>
</gene>
<proteinExistence type="evidence at protein level"/>
<sequence length="706" mass="83122">MGKEALLNLYRIEYRPKDTTFTVFKPTHEIQKEKLNKVRWRVFLQTGLPTFRREDEFWCAGKVEKDTLYLTLSNGEIVELKRVGEEEFRGFQNERECQELFRDFLTKTKVKDKFISDFYKKFRDKITVQGKNRKIALIPEVNEKVLKSEEGYFLLHLDLKFRIQPFETLQTLLERNDFNPKRIRVKPIGIDFVGRVQDVFKAKEKGEEFFRLCMERSTHKSSKKAWEELLKNRELREKAFLVVLEKGYTYPATILKPVLTYENLEDEERNEVADIVRMEPGKRLNLIRYILRRYVKALRDYGWYISPEEERAKGKLNFKDTVLDAKGKNTKVITNLRKFLELCRPFVKKDVLSVEIISVSVYKKLEWRKEEFLKELINFLKNKGIKLKIKGKSLILAQTREEAKEKLIPVINKIKDVDLVIVFLEEYPKVDPYKSFLLYDFVKRELLKKMIPSQVILNRTLKNENLKFVLLNVAEQVLAKTGNIPYKLKEIEGKVDAFVGIDISRITRDGKTVNAVAFTKIFNSKGELVRYYLTSYPAFGEKLTEKAIGDVFSLLEKLGFKKGSKIVVHRDGRLYRDEVAAFKKYGELYGYSLELLEIIKRNNPRFFSNEKFIKGYFYKLSEDSVILATYNQVYEGTHQPIKVRKVYGELPVEVLCSQILSLTLMNYSSFQPIKLPATVHYSDKITKLMLRGIEPIKKEGDIMYWL</sequence>